<protein>
    <recommendedName>
        <fullName evidence="1">Co-chaperonin GroES</fullName>
    </recommendedName>
    <alternativeName>
        <fullName evidence="1">10 kDa chaperonin</fullName>
    </alternativeName>
    <alternativeName>
        <fullName evidence="1">Chaperonin-10</fullName>
        <shortName evidence="1">Cpn10</shortName>
    </alternativeName>
</protein>
<reference key="1">
    <citation type="journal article" date="1999" name="Science">
        <title>Genome sequence of the radioresistant bacterium Deinococcus radiodurans R1.</title>
        <authorList>
            <person name="White O."/>
            <person name="Eisen J.A."/>
            <person name="Heidelberg J.F."/>
            <person name="Hickey E.K."/>
            <person name="Peterson J.D."/>
            <person name="Dodson R.J."/>
            <person name="Haft D.H."/>
            <person name="Gwinn M.L."/>
            <person name="Nelson W.C."/>
            <person name="Richardson D.L."/>
            <person name="Moffat K.S."/>
            <person name="Qin H."/>
            <person name="Jiang L."/>
            <person name="Pamphile W."/>
            <person name="Crosby M."/>
            <person name="Shen M."/>
            <person name="Vamathevan J.J."/>
            <person name="Lam P."/>
            <person name="McDonald L.A."/>
            <person name="Utterback T.R."/>
            <person name="Zalewski C."/>
            <person name="Makarova K.S."/>
            <person name="Aravind L."/>
            <person name="Daly M.J."/>
            <person name="Minton K.W."/>
            <person name="Fleischmann R.D."/>
            <person name="Ketchum K.A."/>
            <person name="Nelson K.E."/>
            <person name="Salzberg S.L."/>
            <person name="Smith H.O."/>
            <person name="Venter J.C."/>
            <person name="Fraser C.M."/>
        </authorList>
    </citation>
    <scope>NUCLEOTIDE SEQUENCE [LARGE SCALE GENOMIC DNA]</scope>
    <source>
        <strain>ATCC 13939 / DSM 20539 / JCM 16871 / CCUG 27074 / LMG 4051 / NBRC 15346 / NCIMB 9279 / VKM B-1422 / R1</strain>
    </source>
</reference>
<dbReference type="EMBL" id="AE000513">
    <property type="protein sequence ID" value="AAF10185.1"/>
    <property type="status" value="ALT_INIT"/>
    <property type="molecule type" value="Genomic_DNA"/>
</dbReference>
<dbReference type="PIR" id="F75499">
    <property type="entry name" value="F75499"/>
</dbReference>
<dbReference type="RefSeq" id="NP_294329.2">
    <property type="nucleotide sequence ID" value="NC_001263.1"/>
</dbReference>
<dbReference type="RefSeq" id="WP_010887251.1">
    <property type="nucleotide sequence ID" value="NC_001263.1"/>
</dbReference>
<dbReference type="SMR" id="Q9RWR0"/>
<dbReference type="FunCoup" id="Q9RWR0">
    <property type="interactions" value="385"/>
</dbReference>
<dbReference type="STRING" id="243230.DR_0606"/>
<dbReference type="PaxDb" id="243230-DR_0606"/>
<dbReference type="EnsemblBacteria" id="AAF10185">
    <property type="protein sequence ID" value="AAF10185"/>
    <property type="gene ID" value="DR_0606"/>
</dbReference>
<dbReference type="GeneID" id="69516850"/>
<dbReference type="KEGG" id="dra:DR_0606"/>
<dbReference type="PATRIC" id="fig|243230.17.peg.784"/>
<dbReference type="eggNOG" id="COG0234">
    <property type="taxonomic scope" value="Bacteria"/>
</dbReference>
<dbReference type="HOGENOM" id="CLU_132825_2_1_0"/>
<dbReference type="InParanoid" id="Q9RWR0"/>
<dbReference type="OrthoDB" id="9806791at2"/>
<dbReference type="Proteomes" id="UP000002524">
    <property type="component" value="Chromosome 1"/>
</dbReference>
<dbReference type="GO" id="GO:0005737">
    <property type="term" value="C:cytoplasm"/>
    <property type="evidence" value="ECO:0007669"/>
    <property type="project" value="UniProtKB-SubCell"/>
</dbReference>
<dbReference type="GO" id="GO:0005524">
    <property type="term" value="F:ATP binding"/>
    <property type="evidence" value="ECO:0007669"/>
    <property type="project" value="InterPro"/>
</dbReference>
<dbReference type="GO" id="GO:0046872">
    <property type="term" value="F:metal ion binding"/>
    <property type="evidence" value="ECO:0000318"/>
    <property type="project" value="GO_Central"/>
</dbReference>
<dbReference type="GO" id="GO:0044183">
    <property type="term" value="F:protein folding chaperone"/>
    <property type="evidence" value="ECO:0007669"/>
    <property type="project" value="InterPro"/>
</dbReference>
<dbReference type="GO" id="GO:0051087">
    <property type="term" value="F:protein-folding chaperone binding"/>
    <property type="evidence" value="ECO:0000318"/>
    <property type="project" value="GO_Central"/>
</dbReference>
<dbReference type="GO" id="GO:0051082">
    <property type="term" value="F:unfolded protein binding"/>
    <property type="evidence" value="ECO:0000318"/>
    <property type="project" value="GO_Central"/>
</dbReference>
<dbReference type="GO" id="GO:0051085">
    <property type="term" value="P:chaperone cofactor-dependent protein refolding"/>
    <property type="evidence" value="ECO:0000318"/>
    <property type="project" value="GO_Central"/>
</dbReference>
<dbReference type="CDD" id="cd00320">
    <property type="entry name" value="cpn10"/>
    <property type="match status" value="1"/>
</dbReference>
<dbReference type="FunFam" id="2.30.33.40:FF:000001">
    <property type="entry name" value="10 kDa chaperonin"/>
    <property type="match status" value="1"/>
</dbReference>
<dbReference type="Gene3D" id="2.30.33.40">
    <property type="entry name" value="GroES chaperonin"/>
    <property type="match status" value="1"/>
</dbReference>
<dbReference type="HAMAP" id="MF_00580">
    <property type="entry name" value="CH10"/>
    <property type="match status" value="1"/>
</dbReference>
<dbReference type="InterPro" id="IPR020818">
    <property type="entry name" value="Chaperonin_GroES"/>
</dbReference>
<dbReference type="InterPro" id="IPR037124">
    <property type="entry name" value="Chaperonin_GroES_sf"/>
</dbReference>
<dbReference type="InterPro" id="IPR011032">
    <property type="entry name" value="GroES-like_sf"/>
</dbReference>
<dbReference type="NCBIfam" id="NF001531">
    <property type="entry name" value="PRK00364.2-2"/>
    <property type="match status" value="1"/>
</dbReference>
<dbReference type="NCBIfam" id="NF001533">
    <property type="entry name" value="PRK00364.2-4"/>
    <property type="match status" value="1"/>
</dbReference>
<dbReference type="NCBIfam" id="NF001534">
    <property type="entry name" value="PRK00364.2-5"/>
    <property type="match status" value="1"/>
</dbReference>
<dbReference type="PANTHER" id="PTHR10772">
    <property type="entry name" value="10 KDA HEAT SHOCK PROTEIN"/>
    <property type="match status" value="1"/>
</dbReference>
<dbReference type="PANTHER" id="PTHR10772:SF58">
    <property type="entry name" value="CO-CHAPERONIN GROES"/>
    <property type="match status" value="1"/>
</dbReference>
<dbReference type="Pfam" id="PF00166">
    <property type="entry name" value="Cpn10"/>
    <property type="match status" value="1"/>
</dbReference>
<dbReference type="PRINTS" id="PR00297">
    <property type="entry name" value="CHAPERONIN10"/>
</dbReference>
<dbReference type="SMART" id="SM00883">
    <property type="entry name" value="Cpn10"/>
    <property type="match status" value="1"/>
</dbReference>
<dbReference type="SUPFAM" id="SSF50129">
    <property type="entry name" value="GroES-like"/>
    <property type="match status" value="1"/>
</dbReference>
<comment type="function">
    <text evidence="1">Together with the chaperonin GroEL, plays an essential role in assisting protein folding. The GroEL-GroES system forms a nano-cage that allows encapsulation of the non-native substrate proteins and provides a physical environment optimized to promote and accelerate protein folding. GroES binds to the apical surface of the GroEL ring, thereby capping the opening of the GroEL channel.</text>
</comment>
<comment type="subunit">
    <text evidence="1">Heptamer of 7 subunits arranged in a ring. Interacts with the chaperonin GroEL.</text>
</comment>
<comment type="subcellular location">
    <subcellularLocation>
        <location evidence="1">Cytoplasm</location>
    </subcellularLocation>
</comment>
<comment type="similarity">
    <text evidence="1">Belongs to the GroES chaperonin family.</text>
</comment>
<comment type="sequence caution" evidence="2">
    <conflict type="erroneous initiation">
        <sequence resource="EMBL-CDS" id="AAF10185"/>
    </conflict>
</comment>
<feature type="chain" id="PRO_0000174745" description="Co-chaperonin GroES">
    <location>
        <begin position="1"/>
        <end position="95"/>
    </location>
</feature>
<keyword id="KW-0143">Chaperone</keyword>
<keyword id="KW-0963">Cytoplasm</keyword>
<keyword id="KW-1185">Reference proteome</keyword>
<sequence>MLKPLGDRVLVEIIEEAEQKTAGGLYVPDSAKEKSQRGKVVAVGTGKTLDNGTKVAMEVKEGDTVYFAKYGGTEVSLEGKNYSLLSERDLLAIVE</sequence>
<proteinExistence type="inferred from homology"/>
<gene>
    <name evidence="1" type="primary">groES</name>
    <name evidence="1" type="synonym">groS</name>
    <name type="ordered locus">DR_0606</name>
</gene>
<evidence type="ECO:0000255" key="1">
    <source>
        <dbReference type="HAMAP-Rule" id="MF_00580"/>
    </source>
</evidence>
<evidence type="ECO:0000305" key="2"/>
<organism>
    <name type="scientific">Deinococcus radiodurans (strain ATCC 13939 / DSM 20539 / JCM 16871 / CCUG 27074 / LMG 4051 / NBRC 15346 / NCIMB 9279 / VKM B-1422 / R1)</name>
    <dbReference type="NCBI Taxonomy" id="243230"/>
    <lineage>
        <taxon>Bacteria</taxon>
        <taxon>Thermotogati</taxon>
        <taxon>Deinococcota</taxon>
        <taxon>Deinococci</taxon>
        <taxon>Deinococcales</taxon>
        <taxon>Deinococcaceae</taxon>
        <taxon>Deinococcus</taxon>
    </lineage>
</organism>
<name>CH10_DEIRA</name>
<accession>Q9RWR0</accession>